<gene>
    <name type="primary">fliC</name>
</gene>
<feature type="initiator methionine" description="Removed" evidence="1">
    <location>
        <position position="1"/>
    </location>
</feature>
<feature type="chain" id="PRO_0000182572" description="Phase 1 flagellin">
    <location>
        <begin position="2"/>
        <end position="505"/>
    </location>
</feature>
<name>FLIC_SALNA</name>
<dbReference type="EMBL" id="D78639">
    <property type="protein sequence ID" value="BAA24529.1"/>
    <property type="molecule type" value="Genomic_DNA"/>
</dbReference>
<dbReference type="SMR" id="O52959"/>
<dbReference type="GO" id="GO:0009288">
    <property type="term" value="C:bacterial-type flagellum"/>
    <property type="evidence" value="ECO:0007669"/>
    <property type="project" value="UniProtKB-SubCell"/>
</dbReference>
<dbReference type="GO" id="GO:0005576">
    <property type="term" value="C:extracellular region"/>
    <property type="evidence" value="ECO:0007669"/>
    <property type="project" value="UniProtKB-SubCell"/>
</dbReference>
<dbReference type="GO" id="GO:0005198">
    <property type="term" value="F:structural molecule activity"/>
    <property type="evidence" value="ECO:0007669"/>
    <property type="project" value="InterPro"/>
</dbReference>
<dbReference type="Gene3D" id="6.10.280.190">
    <property type="match status" value="1"/>
</dbReference>
<dbReference type="Gene3D" id="2.30.220.10">
    <property type="entry name" value="f41 fragment of flagellin, C-terminal domain"/>
    <property type="match status" value="1"/>
</dbReference>
<dbReference type="Gene3D" id="2.170.280.10">
    <property type="entry name" value="f41 fragment of flagellin, middle domain"/>
    <property type="match status" value="1"/>
</dbReference>
<dbReference type="Gene3D" id="1.20.1330.10">
    <property type="entry name" value="f41 fragment of flagellin, N-terminal domain"/>
    <property type="match status" value="1"/>
</dbReference>
<dbReference type="Gene3D" id="6.10.10.10">
    <property type="entry name" value="Flagellar export chaperone, C-terminal domain"/>
    <property type="match status" value="1"/>
</dbReference>
<dbReference type="InterPro" id="IPR001492">
    <property type="entry name" value="Flagellin"/>
</dbReference>
<dbReference type="InterPro" id="IPR046358">
    <property type="entry name" value="Flagellin_C"/>
</dbReference>
<dbReference type="InterPro" id="IPR042187">
    <property type="entry name" value="Flagellin_C_sub2"/>
</dbReference>
<dbReference type="InterPro" id="IPR001029">
    <property type="entry name" value="Flagellin_N"/>
</dbReference>
<dbReference type="PANTHER" id="PTHR42792">
    <property type="entry name" value="FLAGELLIN"/>
    <property type="match status" value="1"/>
</dbReference>
<dbReference type="PANTHER" id="PTHR42792:SF2">
    <property type="entry name" value="FLAGELLIN"/>
    <property type="match status" value="1"/>
</dbReference>
<dbReference type="Pfam" id="PF00700">
    <property type="entry name" value="Flagellin_C"/>
    <property type="match status" value="1"/>
</dbReference>
<dbReference type="Pfam" id="PF00669">
    <property type="entry name" value="Flagellin_N"/>
    <property type="match status" value="1"/>
</dbReference>
<dbReference type="Pfam" id="PF22370">
    <property type="entry name" value="FliC-like_3rd"/>
    <property type="match status" value="1"/>
</dbReference>
<dbReference type="PRINTS" id="PR00207">
    <property type="entry name" value="FLAGELLIN"/>
</dbReference>
<dbReference type="SUPFAM" id="SSF64518">
    <property type="entry name" value="Phase 1 flagellin"/>
    <property type="match status" value="1"/>
</dbReference>
<reference key="1">
    <citation type="submission" date="1995-12" db="EMBL/GenBank/DDBJ databases">
        <title>Detection and typing of Salmonella fliC gene by PCR-RFLP for diagnosis of bovine salmonellosis.</title>
        <authorList>
            <person name="Sekizaki T."/>
            <person name="Sato Y."/>
            <person name="Osaki M."/>
            <person name="Mitsumori M."/>
        </authorList>
    </citation>
    <scope>NUCLEOTIDE SEQUENCE [GENOMIC DNA]</scope>
    <source>
        <strain>L-5</strain>
    </source>
</reference>
<sequence>MAQVINTNSLSLLTQNNLNKSQSSLSSAIERLSSGLRINSAKDDAAGQAIANRFTSNIKGLTQASRNANDGISIAQTTEGALNEINNNLQRVRELSVQATNGTNSDSDLKSIQDEIQQRLEEIDRVSNQTQFNGVKVLSQDNQMKIQVGANDGETITIDLQKIDVKSLGLDGFNVNGPKEATVGDLKSSFKNVTGYDTYAAGADKYRVDINSGAVVTDAVAPDKVYVNAANGQLTTDDAENNTAVDLFKTTKSAAGTAEAKAIAGAIKGGKEGDTFDYKGVTFTIDTKTGDDGNGKVSTTINGEKVTLTVADIAIGAADVNAATLQSSKNVYTSVVNGQFTFDDKTKSESAKLSDLEANNAVKGESKITVNGAEYTANATGDKITLAGKTMFIDKTASGVSTLINEDAAAAKKSTANPLASIDSALSKVDAVRSSLGAIQNRFDSAITNLGNTVTNLNSARSRIEDADYATEVSNMSKAQILQQAGTSVLAQANQVPQNVLSLLR</sequence>
<organism>
    <name type="scientific">Salmonella naestved</name>
    <dbReference type="NCBI Taxonomy" id="71517"/>
    <lineage>
        <taxon>Bacteria</taxon>
        <taxon>Pseudomonadati</taxon>
        <taxon>Pseudomonadota</taxon>
        <taxon>Gammaproteobacteria</taxon>
        <taxon>Enterobacterales</taxon>
        <taxon>Enterobacteriaceae</taxon>
        <taxon>Salmonella</taxon>
    </lineage>
</organism>
<proteinExistence type="inferred from homology"/>
<protein>
    <recommendedName>
        <fullName>Phase 1 flagellin</fullName>
    </recommendedName>
</protein>
<accession>O52959</accession>
<evidence type="ECO:0000250" key="1"/>
<evidence type="ECO:0000305" key="2"/>
<comment type="function">
    <text>Flagellin is the subunit protein which polymerizes to form the filaments of bacterial flagella.</text>
</comment>
<comment type="subcellular location">
    <subcellularLocation>
        <location>Secreted</location>
    </subcellularLocation>
    <subcellularLocation>
        <location>Bacterial flagellum</location>
    </subcellularLocation>
</comment>
<comment type="miscellaneous">
    <text>Individual Salmonella serotypes usually alternate between the production of 2 antigenic forms of flagella, termed phase 1 and phase 2, each specified by separate structural genes.</text>
</comment>
<comment type="similarity">
    <text evidence="2">Belongs to the bacterial flagellin family.</text>
</comment>
<keyword id="KW-0975">Bacterial flagellum</keyword>
<keyword id="KW-0964">Secreted</keyword>